<sequence>MLHLLALALLLSLVSAAPAPGQALQRSGIIGGKEAPGSRWPWQVSLRVRDQYWRHQCGGSLIHPQWVLTAAHCIGPELQEPSDFRVQLREQHLYYQDRLLPISRVIPHPHYYMVENGADIALLQLEEPVSISRHVQPVTLPPASETFPPESQCWVTGWGDVDNGRPLPPPYPLKQVKVPIVENSVCDWKYHSGLSTDYSVPIVQEDNLCAGDGGRDSCQGDSGGPLVCKVNGTWLQAGVVSWGDGCAKPNRPGIYTRITSYLDWIHQYVPQEP</sequence>
<proteinExistence type="evidence at transcript level"/>
<accession>Q9XSM2</accession>
<organism>
    <name type="scientific">Ovis aries</name>
    <name type="common">Sheep</name>
    <dbReference type="NCBI Taxonomy" id="9940"/>
    <lineage>
        <taxon>Eukaryota</taxon>
        <taxon>Metazoa</taxon>
        <taxon>Chordata</taxon>
        <taxon>Craniata</taxon>
        <taxon>Vertebrata</taxon>
        <taxon>Euteleostomi</taxon>
        <taxon>Mammalia</taxon>
        <taxon>Eutheria</taxon>
        <taxon>Laurasiatheria</taxon>
        <taxon>Artiodactyla</taxon>
        <taxon>Ruminantia</taxon>
        <taxon>Pecora</taxon>
        <taxon>Bovidae</taxon>
        <taxon>Caprinae</taxon>
        <taxon>Ovis</taxon>
    </lineage>
</organism>
<feature type="signal peptide" evidence="2">
    <location>
        <begin position="1"/>
        <end position="18"/>
    </location>
</feature>
<feature type="propeptide" id="PRO_0000027488" description="Activation peptide" evidence="1">
    <location>
        <begin position="19"/>
        <end position="28"/>
    </location>
</feature>
<feature type="chain" id="PRO_0000027489" description="Tryptase-2">
    <location>
        <begin position="29"/>
        <end position="273"/>
    </location>
</feature>
<feature type="domain" description="Peptidase S1" evidence="3">
    <location>
        <begin position="29"/>
        <end position="270"/>
    </location>
</feature>
<feature type="active site" description="Charge relay system" evidence="1">
    <location>
        <position position="72"/>
    </location>
</feature>
<feature type="active site" description="Charge relay system" evidence="1">
    <location>
        <position position="119"/>
    </location>
</feature>
<feature type="active site" description="Charge relay system" evidence="1">
    <location>
        <position position="222"/>
    </location>
</feature>
<feature type="glycosylation site" description="N-linked (GlcNAc...) asparagine" evidence="2">
    <location>
        <position position="231"/>
    </location>
</feature>
<feature type="disulfide bond" evidence="3">
    <location>
        <begin position="57"/>
        <end position="73"/>
    </location>
</feature>
<feature type="disulfide bond" evidence="3">
    <location>
        <begin position="153"/>
        <end position="228"/>
    </location>
</feature>
<feature type="disulfide bond" evidence="3">
    <location>
        <begin position="186"/>
        <end position="209"/>
    </location>
</feature>
<feature type="disulfide bond" evidence="3">
    <location>
        <begin position="218"/>
        <end position="246"/>
    </location>
</feature>
<reference key="1">
    <citation type="journal article" date="2000" name="Clin. Exp. Allergy">
        <title>cDNA sequence of two sheep mast cell tryptases and the differential expression of tryptase and sheep mast cell proteinase-1 in lung, dermis and gastrointestinal tract.</title>
        <authorList>
            <person name="Pemberton A.D."/>
            <person name="McAleese S.M."/>
            <person name="Huntley J.F."/>
            <person name="Collie D.D.S."/>
            <person name="Scudamore C.L."/>
            <person name="McEuen A.R."/>
            <person name="Walls A.F."/>
            <person name="Miller H.R.P."/>
        </authorList>
    </citation>
    <scope>NUCLEOTIDE SEQUENCE [MRNA]</scope>
    <source>
        <tissue>Abomasum</tissue>
    </source>
</reference>
<keyword id="KW-1015">Disulfide bond</keyword>
<keyword id="KW-0325">Glycoprotein</keyword>
<keyword id="KW-0378">Hydrolase</keyword>
<keyword id="KW-0645">Protease</keyword>
<keyword id="KW-1185">Reference proteome</keyword>
<keyword id="KW-0964">Secreted</keyword>
<keyword id="KW-0720">Serine protease</keyword>
<keyword id="KW-0732">Signal</keyword>
<keyword id="KW-0865">Zymogen</keyword>
<name>TRYT_SHEEP</name>
<protein>
    <recommendedName>
        <fullName>Tryptase-2</fullName>
        <ecNumber>3.4.21.59</ecNumber>
    </recommendedName>
</protein>
<dbReference type="EC" id="3.4.21.59"/>
<dbReference type="EMBL" id="Y18224">
    <property type="protein sequence ID" value="CAB41989.1"/>
    <property type="molecule type" value="mRNA"/>
</dbReference>
<dbReference type="RefSeq" id="NP_001116478.1">
    <property type="nucleotide sequence ID" value="NM_001123006.2"/>
</dbReference>
<dbReference type="SMR" id="Q9XSM2"/>
<dbReference type="STRING" id="9940.ENSOARP00000015758"/>
<dbReference type="MEROPS" id="S01.118"/>
<dbReference type="PaxDb" id="9940-ENSOARP00000015758"/>
<dbReference type="GeneID" id="100144429"/>
<dbReference type="KEGG" id="oas:100144429"/>
<dbReference type="eggNOG" id="KOG3627">
    <property type="taxonomic scope" value="Eukaryota"/>
</dbReference>
<dbReference type="OrthoDB" id="10002959at2759"/>
<dbReference type="BRENDA" id="3.4.21.59">
    <property type="organism ID" value="2668"/>
</dbReference>
<dbReference type="Proteomes" id="UP000002356">
    <property type="component" value="Unplaced"/>
</dbReference>
<dbReference type="GO" id="GO:0005576">
    <property type="term" value="C:extracellular region"/>
    <property type="evidence" value="ECO:0007669"/>
    <property type="project" value="UniProtKB-SubCell"/>
</dbReference>
<dbReference type="GO" id="GO:0004252">
    <property type="term" value="F:serine-type endopeptidase activity"/>
    <property type="evidence" value="ECO:0007669"/>
    <property type="project" value="UniProtKB-EC"/>
</dbReference>
<dbReference type="GO" id="GO:0006508">
    <property type="term" value="P:proteolysis"/>
    <property type="evidence" value="ECO:0007669"/>
    <property type="project" value="UniProtKB-KW"/>
</dbReference>
<dbReference type="CDD" id="cd00190">
    <property type="entry name" value="Tryp_SPc"/>
    <property type="match status" value="1"/>
</dbReference>
<dbReference type="FunFam" id="2.40.10.10:FF:000039">
    <property type="entry name" value="Brain-specific serine protease 4"/>
    <property type="match status" value="1"/>
</dbReference>
<dbReference type="Gene3D" id="2.40.10.10">
    <property type="entry name" value="Trypsin-like serine proteases"/>
    <property type="match status" value="2"/>
</dbReference>
<dbReference type="InterPro" id="IPR009003">
    <property type="entry name" value="Peptidase_S1_PA"/>
</dbReference>
<dbReference type="InterPro" id="IPR043504">
    <property type="entry name" value="Peptidase_S1_PA_chymotrypsin"/>
</dbReference>
<dbReference type="InterPro" id="IPR001314">
    <property type="entry name" value="Peptidase_S1A"/>
</dbReference>
<dbReference type="InterPro" id="IPR001254">
    <property type="entry name" value="Trypsin_dom"/>
</dbReference>
<dbReference type="InterPro" id="IPR018114">
    <property type="entry name" value="TRYPSIN_HIS"/>
</dbReference>
<dbReference type="InterPro" id="IPR033116">
    <property type="entry name" value="TRYPSIN_SER"/>
</dbReference>
<dbReference type="PANTHER" id="PTHR24253:SF144">
    <property type="entry name" value="CHYMOTRYPSIN-LIKE PROTEASE CTRL-1-RELATED"/>
    <property type="match status" value="1"/>
</dbReference>
<dbReference type="PANTHER" id="PTHR24253">
    <property type="entry name" value="TRANSMEMBRANE PROTEASE SERINE"/>
    <property type="match status" value="1"/>
</dbReference>
<dbReference type="Pfam" id="PF00089">
    <property type="entry name" value="Trypsin"/>
    <property type="match status" value="1"/>
</dbReference>
<dbReference type="PRINTS" id="PR00722">
    <property type="entry name" value="CHYMOTRYPSIN"/>
</dbReference>
<dbReference type="SMART" id="SM00020">
    <property type="entry name" value="Tryp_SPc"/>
    <property type="match status" value="1"/>
</dbReference>
<dbReference type="SUPFAM" id="SSF50494">
    <property type="entry name" value="Trypsin-like serine proteases"/>
    <property type="match status" value="1"/>
</dbReference>
<dbReference type="PROSITE" id="PS50240">
    <property type="entry name" value="TRYPSIN_DOM"/>
    <property type="match status" value="1"/>
</dbReference>
<dbReference type="PROSITE" id="PS00134">
    <property type="entry name" value="TRYPSIN_HIS"/>
    <property type="match status" value="1"/>
</dbReference>
<dbReference type="PROSITE" id="PS00135">
    <property type="entry name" value="TRYPSIN_SER"/>
    <property type="match status" value="1"/>
</dbReference>
<evidence type="ECO:0000250" key="1"/>
<evidence type="ECO:0000255" key="2"/>
<evidence type="ECO:0000255" key="3">
    <source>
        <dbReference type="PROSITE-ProRule" id="PRU00274"/>
    </source>
</evidence>
<comment type="function">
    <text>Tryptase is the major neutral protease present in mast cells and is secreted upon the coupled activation-degranulation response of this cell type.</text>
</comment>
<comment type="catalytic activity">
    <reaction>
        <text>Preferential cleavage: Arg-|-Xaa, Lys-|-Xaa, but with more restricted specificity than trypsin.</text>
        <dbReference type="EC" id="3.4.21.59"/>
    </reaction>
</comment>
<comment type="subunit">
    <text evidence="1">Homotetramer.</text>
</comment>
<comment type="subcellular location">
    <subcellularLocation>
        <location>Secreted</location>
    </subcellularLocation>
    <text>Released from the secretory granules upon mast cell activation.</text>
</comment>
<comment type="similarity">
    <text evidence="3">Belongs to the peptidase S1 family. Tryptase subfamily.</text>
</comment>